<evidence type="ECO:0000255" key="1">
    <source>
        <dbReference type="HAMAP-Rule" id="MF_01693"/>
    </source>
</evidence>
<accession>Q8PDF1</accession>
<comment type="function">
    <text evidence="1">Catalyzes the decarboxylative condensation of pimeloyl-[acyl-carrier protein] and L-alanine to produce 8-amino-7-oxononanoate (AON), [acyl-carrier protein], and carbon dioxide.</text>
</comment>
<comment type="catalytic activity">
    <reaction evidence="1">
        <text>6-carboxyhexanoyl-[ACP] + L-alanine + H(+) = (8S)-8-amino-7-oxononanoate + holo-[ACP] + CO2</text>
        <dbReference type="Rhea" id="RHEA:42288"/>
        <dbReference type="Rhea" id="RHEA-COMP:9685"/>
        <dbReference type="Rhea" id="RHEA-COMP:9955"/>
        <dbReference type="ChEBI" id="CHEBI:15378"/>
        <dbReference type="ChEBI" id="CHEBI:16526"/>
        <dbReference type="ChEBI" id="CHEBI:57972"/>
        <dbReference type="ChEBI" id="CHEBI:64479"/>
        <dbReference type="ChEBI" id="CHEBI:78846"/>
        <dbReference type="ChEBI" id="CHEBI:149468"/>
        <dbReference type="EC" id="2.3.1.47"/>
    </reaction>
</comment>
<comment type="cofactor">
    <cofactor evidence="1">
        <name>pyridoxal 5'-phosphate</name>
        <dbReference type="ChEBI" id="CHEBI:597326"/>
    </cofactor>
</comment>
<comment type="pathway">
    <text evidence="1">Cofactor biosynthesis; biotin biosynthesis.</text>
</comment>
<comment type="subunit">
    <text evidence="1">Homodimer.</text>
</comment>
<comment type="similarity">
    <text evidence="1">Belongs to the class-II pyridoxal-phosphate-dependent aminotransferase family. BioF subfamily.</text>
</comment>
<feature type="chain" id="PRO_0000381144" description="8-amino-7-oxononanoate synthase">
    <location>
        <begin position="1"/>
        <end position="401"/>
    </location>
</feature>
<feature type="binding site" evidence="1">
    <location>
        <position position="24"/>
    </location>
    <ligand>
        <name>substrate</name>
    </ligand>
</feature>
<feature type="binding site" evidence="1">
    <location>
        <begin position="111"/>
        <end position="112"/>
    </location>
    <ligand>
        <name>pyridoxal 5'-phosphate</name>
        <dbReference type="ChEBI" id="CHEBI:597326"/>
    </ligand>
</feature>
<feature type="binding site" evidence="1">
    <location>
        <position position="137"/>
    </location>
    <ligand>
        <name>substrate</name>
    </ligand>
</feature>
<feature type="binding site" evidence="1">
    <location>
        <position position="183"/>
    </location>
    <ligand>
        <name>pyridoxal 5'-phosphate</name>
        <dbReference type="ChEBI" id="CHEBI:597326"/>
    </ligand>
</feature>
<feature type="binding site" evidence="1">
    <location>
        <position position="211"/>
    </location>
    <ligand>
        <name>pyridoxal 5'-phosphate</name>
        <dbReference type="ChEBI" id="CHEBI:597326"/>
    </ligand>
</feature>
<feature type="binding site" evidence="1">
    <location>
        <position position="240"/>
    </location>
    <ligand>
        <name>pyridoxal 5'-phosphate</name>
        <dbReference type="ChEBI" id="CHEBI:597326"/>
    </ligand>
</feature>
<feature type="binding site" evidence="1">
    <location>
        <position position="357"/>
    </location>
    <ligand>
        <name>substrate</name>
    </ligand>
</feature>
<feature type="modified residue" description="N6-(pyridoxal phosphate)lysine" evidence="1">
    <location>
        <position position="243"/>
    </location>
</feature>
<protein>
    <recommendedName>
        <fullName evidence="1">8-amino-7-oxononanoate synthase</fullName>
        <shortName evidence="1">AONS</shortName>
        <ecNumber evidence="1">2.3.1.47</ecNumber>
    </recommendedName>
    <alternativeName>
        <fullName evidence="1">7-keto-8-amino-pelargonic acid synthase</fullName>
        <shortName evidence="1">7-KAP synthase</shortName>
        <shortName evidence="1">KAPA synthase</shortName>
    </alternativeName>
    <alternativeName>
        <fullName evidence="1">8-amino-7-ketopelargonate synthase</fullName>
    </alternativeName>
</protein>
<dbReference type="EC" id="2.3.1.47" evidence="1"/>
<dbReference type="EMBL" id="AE008922">
    <property type="protein sequence ID" value="AAM39706.1"/>
    <property type="molecule type" value="Genomic_DNA"/>
</dbReference>
<dbReference type="RefSeq" id="NP_635782.1">
    <property type="nucleotide sequence ID" value="NC_003902.1"/>
</dbReference>
<dbReference type="RefSeq" id="WP_011035641.1">
    <property type="nucleotide sequence ID" value="NC_003902.1"/>
</dbReference>
<dbReference type="SMR" id="Q8PDF1"/>
<dbReference type="STRING" id="190485.XCC0387"/>
<dbReference type="EnsemblBacteria" id="AAM39706">
    <property type="protein sequence ID" value="AAM39706"/>
    <property type="gene ID" value="XCC0387"/>
</dbReference>
<dbReference type="KEGG" id="xcc:XCC0387"/>
<dbReference type="PATRIC" id="fig|190485.4.peg.426"/>
<dbReference type="eggNOG" id="COG0156">
    <property type="taxonomic scope" value="Bacteria"/>
</dbReference>
<dbReference type="HOGENOM" id="CLU_015846_11_2_6"/>
<dbReference type="OrthoDB" id="9807157at2"/>
<dbReference type="UniPathway" id="UPA00078"/>
<dbReference type="Proteomes" id="UP000001010">
    <property type="component" value="Chromosome"/>
</dbReference>
<dbReference type="GO" id="GO:0008710">
    <property type="term" value="F:8-amino-7-oxononanoate synthase activity"/>
    <property type="evidence" value="ECO:0000318"/>
    <property type="project" value="GO_Central"/>
</dbReference>
<dbReference type="GO" id="GO:0030170">
    <property type="term" value="F:pyridoxal phosphate binding"/>
    <property type="evidence" value="ECO:0007669"/>
    <property type="project" value="UniProtKB-UniRule"/>
</dbReference>
<dbReference type="GO" id="GO:0009102">
    <property type="term" value="P:biotin biosynthetic process"/>
    <property type="evidence" value="ECO:0000318"/>
    <property type="project" value="GO_Central"/>
</dbReference>
<dbReference type="Gene3D" id="3.90.1150.10">
    <property type="entry name" value="Aspartate Aminotransferase, domain 1"/>
    <property type="match status" value="1"/>
</dbReference>
<dbReference type="Gene3D" id="3.40.640.10">
    <property type="entry name" value="Type I PLP-dependent aspartate aminotransferase-like (Major domain)"/>
    <property type="match status" value="1"/>
</dbReference>
<dbReference type="HAMAP" id="MF_01693">
    <property type="entry name" value="BioF_aminotrans_2"/>
    <property type="match status" value="1"/>
</dbReference>
<dbReference type="InterPro" id="IPR004839">
    <property type="entry name" value="Aminotransferase_I/II_large"/>
</dbReference>
<dbReference type="InterPro" id="IPR050087">
    <property type="entry name" value="AON_synthase_class-II"/>
</dbReference>
<dbReference type="InterPro" id="IPR004723">
    <property type="entry name" value="AONS_Archaea/Proteobacteria"/>
</dbReference>
<dbReference type="InterPro" id="IPR022834">
    <property type="entry name" value="AONS_Proteobacteria"/>
</dbReference>
<dbReference type="InterPro" id="IPR015424">
    <property type="entry name" value="PyrdxlP-dep_Trfase"/>
</dbReference>
<dbReference type="InterPro" id="IPR015421">
    <property type="entry name" value="PyrdxlP-dep_Trfase_major"/>
</dbReference>
<dbReference type="InterPro" id="IPR015422">
    <property type="entry name" value="PyrdxlP-dep_Trfase_small"/>
</dbReference>
<dbReference type="NCBIfam" id="TIGR00858">
    <property type="entry name" value="bioF"/>
    <property type="match status" value="1"/>
</dbReference>
<dbReference type="PANTHER" id="PTHR13693:SF100">
    <property type="entry name" value="8-AMINO-7-OXONONANOATE SYNTHASE"/>
    <property type="match status" value="1"/>
</dbReference>
<dbReference type="PANTHER" id="PTHR13693">
    <property type="entry name" value="CLASS II AMINOTRANSFERASE/8-AMINO-7-OXONONANOATE SYNTHASE"/>
    <property type="match status" value="1"/>
</dbReference>
<dbReference type="Pfam" id="PF00155">
    <property type="entry name" value="Aminotran_1_2"/>
    <property type="match status" value="1"/>
</dbReference>
<dbReference type="SUPFAM" id="SSF53383">
    <property type="entry name" value="PLP-dependent transferases"/>
    <property type="match status" value="1"/>
</dbReference>
<dbReference type="PROSITE" id="PS00599">
    <property type="entry name" value="AA_TRANSFER_CLASS_2"/>
    <property type="match status" value="1"/>
</dbReference>
<keyword id="KW-0093">Biotin biosynthesis</keyword>
<keyword id="KW-0663">Pyridoxal phosphate</keyword>
<keyword id="KW-1185">Reference proteome</keyword>
<keyword id="KW-0808">Transferase</keyword>
<organism>
    <name type="scientific">Xanthomonas campestris pv. campestris (strain ATCC 33913 / DSM 3586 / NCPPB 528 / LMG 568 / P 25)</name>
    <dbReference type="NCBI Taxonomy" id="190485"/>
    <lineage>
        <taxon>Bacteria</taxon>
        <taxon>Pseudomonadati</taxon>
        <taxon>Pseudomonadota</taxon>
        <taxon>Gammaproteobacteria</taxon>
        <taxon>Lysobacterales</taxon>
        <taxon>Lysobacteraceae</taxon>
        <taxon>Xanthomonas</taxon>
    </lineage>
</organism>
<sequence length="401" mass="43258">MARPDLHERISSLRKLRVAQERVRVRRQVGRRDGVRLEIDGRWLTGFCSNDYLGLSQQFEVVAALQDAAARDGAGATASHLICGHHTAHETLERDIAEWLGYPSALLFGSGFIANLAVQQALLSEEDDVCVQDRLNHASLLDATRLAGCRLRRYPHLDVEGAMRQLKGAPEGAAMLASDGVFSMDGDVAPLRALSLVARMQEALFYVDDAHGVGVLGPQGRGCVADAGLGVAEVPLQLVTLGKALGGYGAVVVGEEALIRHLAETARPYIYTTALPPAQVAATLAAVRLARRDDWRRTRLTELIGTFRDGARRHGFELMASDTPIQPLLCGEEPTVMAMSAALEQAGFMVGAIRPPTVPEGKARLRVTLSALHTPQQVQALVDAIVQARDVVSRQPQRALA</sequence>
<reference key="1">
    <citation type="journal article" date="2002" name="Nature">
        <title>Comparison of the genomes of two Xanthomonas pathogens with differing host specificities.</title>
        <authorList>
            <person name="da Silva A.C.R."/>
            <person name="Ferro J.A."/>
            <person name="Reinach F.C."/>
            <person name="Farah C.S."/>
            <person name="Furlan L.R."/>
            <person name="Quaggio R.B."/>
            <person name="Monteiro-Vitorello C.B."/>
            <person name="Van Sluys M.A."/>
            <person name="Almeida N.F. Jr."/>
            <person name="Alves L.M.C."/>
            <person name="do Amaral A.M."/>
            <person name="Bertolini M.C."/>
            <person name="Camargo L.E.A."/>
            <person name="Camarotte G."/>
            <person name="Cannavan F."/>
            <person name="Cardozo J."/>
            <person name="Chambergo F."/>
            <person name="Ciapina L.P."/>
            <person name="Cicarelli R.M.B."/>
            <person name="Coutinho L.L."/>
            <person name="Cursino-Santos J.R."/>
            <person name="El-Dorry H."/>
            <person name="Faria J.B."/>
            <person name="Ferreira A.J.S."/>
            <person name="Ferreira R.C.C."/>
            <person name="Ferro M.I.T."/>
            <person name="Formighieri E.F."/>
            <person name="Franco M.C."/>
            <person name="Greggio C.C."/>
            <person name="Gruber A."/>
            <person name="Katsuyama A.M."/>
            <person name="Kishi L.T."/>
            <person name="Leite R.P."/>
            <person name="Lemos E.G.M."/>
            <person name="Lemos M.V.F."/>
            <person name="Locali E.C."/>
            <person name="Machado M.A."/>
            <person name="Madeira A.M.B.N."/>
            <person name="Martinez-Rossi N.M."/>
            <person name="Martins E.C."/>
            <person name="Meidanis J."/>
            <person name="Menck C.F.M."/>
            <person name="Miyaki C.Y."/>
            <person name="Moon D.H."/>
            <person name="Moreira L.M."/>
            <person name="Novo M.T.M."/>
            <person name="Okura V.K."/>
            <person name="Oliveira M.C."/>
            <person name="Oliveira V.R."/>
            <person name="Pereira H.A."/>
            <person name="Rossi A."/>
            <person name="Sena J.A.D."/>
            <person name="Silva C."/>
            <person name="de Souza R.F."/>
            <person name="Spinola L.A.F."/>
            <person name="Takita M.A."/>
            <person name="Tamura R.E."/>
            <person name="Teixeira E.C."/>
            <person name="Tezza R.I.D."/>
            <person name="Trindade dos Santos M."/>
            <person name="Truffi D."/>
            <person name="Tsai S.M."/>
            <person name="White F.F."/>
            <person name="Setubal J.C."/>
            <person name="Kitajima J.P."/>
        </authorList>
    </citation>
    <scope>NUCLEOTIDE SEQUENCE [LARGE SCALE GENOMIC DNA]</scope>
    <source>
        <strain>ATCC 33913 / DSM 3586 / NCPPB 528 / LMG 568 / P 25</strain>
    </source>
</reference>
<gene>
    <name evidence="1" type="primary">bioF</name>
    <name type="ordered locus">XCC0387</name>
</gene>
<proteinExistence type="inferred from homology"/>
<name>BIOF_XANCP</name>